<accession>B4UBD3</accession>
<dbReference type="EMBL" id="CP001131">
    <property type="protein sequence ID" value="ACG73195.1"/>
    <property type="molecule type" value="Genomic_DNA"/>
</dbReference>
<dbReference type="RefSeq" id="WP_012525997.1">
    <property type="nucleotide sequence ID" value="NC_011145.1"/>
</dbReference>
<dbReference type="SMR" id="B4UBD3"/>
<dbReference type="KEGG" id="ank:AnaeK_1967"/>
<dbReference type="HOGENOM" id="CLU_103507_2_1_7"/>
<dbReference type="OrthoDB" id="9803541at2"/>
<dbReference type="Proteomes" id="UP000001871">
    <property type="component" value="Chromosome"/>
</dbReference>
<dbReference type="GO" id="GO:0022625">
    <property type="term" value="C:cytosolic large ribosomal subunit"/>
    <property type="evidence" value="ECO:0007669"/>
    <property type="project" value="TreeGrafter"/>
</dbReference>
<dbReference type="GO" id="GO:0003735">
    <property type="term" value="F:structural constituent of ribosome"/>
    <property type="evidence" value="ECO:0007669"/>
    <property type="project" value="InterPro"/>
</dbReference>
<dbReference type="GO" id="GO:0006412">
    <property type="term" value="P:translation"/>
    <property type="evidence" value="ECO:0007669"/>
    <property type="project" value="UniProtKB-UniRule"/>
</dbReference>
<dbReference type="Gene3D" id="2.30.30.790">
    <property type="match status" value="1"/>
</dbReference>
<dbReference type="HAMAP" id="MF_00402">
    <property type="entry name" value="Ribosomal_bL19"/>
    <property type="match status" value="1"/>
</dbReference>
<dbReference type="InterPro" id="IPR001857">
    <property type="entry name" value="Ribosomal_bL19"/>
</dbReference>
<dbReference type="InterPro" id="IPR038657">
    <property type="entry name" value="Ribosomal_bL19_sf"/>
</dbReference>
<dbReference type="InterPro" id="IPR008991">
    <property type="entry name" value="Translation_prot_SH3-like_sf"/>
</dbReference>
<dbReference type="NCBIfam" id="TIGR01024">
    <property type="entry name" value="rplS_bact"/>
    <property type="match status" value="1"/>
</dbReference>
<dbReference type="PANTHER" id="PTHR15680:SF9">
    <property type="entry name" value="LARGE RIBOSOMAL SUBUNIT PROTEIN BL19M"/>
    <property type="match status" value="1"/>
</dbReference>
<dbReference type="PANTHER" id="PTHR15680">
    <property type="entry name" value="RIBOSOMAL PROTEIN L19"/>
    <property type="match status" value="1"/>
</dbReference>
<dbReference type="Pfam" id="PF01245">
    <property type="entry name" value="Ribosomal_L19"/>
    <property type="match status" value="1"/>
</dbReference>
<dbReference type="PIRSF" id="PIRSF002191">
    <property type="entry name" value="Ribosomal_L19"/>
    <property type="match status" value="1"/>
</dbReference>
<dbReference type="PRINTS" id="PR00061">
    <property type="entry name" value="RIBOSOMALL19"/>
</dbReference>
<dbReference type="SUPFAM" id="SSF50104">
    <property type="entry name" value="Translation proteins SH3-like domain"/>
    <property type="match status" value="1"/>
</dbReference>
<reference key="1">
    <citation type="submission" date="2008-08" db="EMBL/GenBank/DDBJ databases">
        <title>Complete sequence of Anaeromyxobacter sp. K.</title>
        <authorList>
            <consortium name="US DOE Joint Genome Institute"/>
            <person name="Lucas S."/>
            <person name="Copeland A."/>
            <person name="Lapidus A."/>
            <person name="Glavina del Rio T."/>
            <person name="Dalin E."/>
            <person name="Tice H."/>
            <person name="Bruce D."/>
            <person name="Goodwin L."/>
            <person name="Pitluck S."/>
            <person name="Saunders E."/>
            <person name="Brettin T."/>
            <person name="Detter J.C."/>
            <person name="Han C."/>
            <person name="Larimer F."/>
            <person name="Land M."/>
            <person name="Hauser L."/>
            <person name="Kyrpides N."/>
            <person name="Ovchinnikiva G."/>
            <person name="Beliaev A."/>
        </authorList>
    </citation>
    <scope>NUCLEOTIDE SEQUENCE [LARGE SCALE GENOMIC DNA]</scope>
    <source>
        <strain>K</strain>
    </source>
</reference>
<gene>
    <name evidence="1" type="primary">rplS</name>
    <name type="ordered locus">AnaeK_1967</name>
</gene>
<feature type="chain" id="PRO_1000193787" description="Large ribosomal subunit protein bL19">
    <location>
        <begin position="1"/>
        <end position="131"/>
    </location>
</feature>
<sequence length="131" mass="14392">MLRKAIADIEAKYLRTDLPEMRAGDSVRVHTKIKEGDKERIQVFEGVVIAYRKGAPGSSMFTVRKVSYGVGVERMFPVHSPRIDKIEVVGHGGVRRSRLYFLRGLQGKAARLHQEEGPGAADAAHAAPTPA</sequence>
<proteinExistence type="inferred from homology"/>
<name>RL19_ANASK</name>
<evidence type="ECO:0000255" key="1">
    <source>
        <dbReference type="HAMAP-Rule" id="MF_00402"/>
    </source>
</evidence>
<evidence type="ECO:0000305" key="2"/>
<organism>
    <name type="scientific">Anaeromyxobacter sp. (strain K)</name>
    <dbReference type="NCBI Taxonomy" id="447217"/>
    <lineage>
        <taxon>Bacteria</taxon>
        <taxon>Pseudomonadati</taxon>
        <taxon>Myxococcota</taxon>
        <taxon>Myxococcia</taxon>
        <taxon>Myxococcales</taxon>
        <taxon>Cystobacterineae</taxon>
        <taxon>Anaeromyxobacteraceae</taxon>
        <taxon>Anaeromyxobacter</taxon>
    </lineage>
</organism>
<protein>
    <recommendedName>
        <fullName evidence="1">Large ribosomal subunit protein bL19</fullName>
    </recommendedName>
    <alternativeName>
        <fullName evidence="2">50S ribosomal protein L19</fullName>
    </alternativeName>
</protein>
<comment type="function">
    <text evidence="1">This protein is located at the 30S-50S ribosomal subunit interface and may play a role in the structure and function of the aminoacyl-tRNA binding site.</text>
</comment>
<comment type="similarity">
    <text evidence="1">Belongs to the bacterial ribosomal protein bL19 family.</text>
</comment>
<keyword id="KW-0687">Ribonucleoprotein</keyword>
<keyword id="KW-0689">Ribosomal protein</keyword>